<keyword id="KW-0067">ATP-binding</keyword>
<keyword id="KW-0119">Carbohydrate metabolism</keyword>
<keyword id="KW-0418">Kinase</keyword>
<keyword id="KW-0460">Magnesium</keyword>
<keyword id="KW-0479">Metal-binding</keyword>
<keyword id="KW-0511">Multifunctional enzyme</keyword>
<keyword id="KW-0547">Nucleotide-binding</keyword>
<keyword id="KW-1185">Reference proteome</keyword>
<keyword id="KW-0723">Serine/threonine-protein kinase</keyword>
<keyword id="KW-0808">Transferase</keyword>
<sequence length="313" mass="35876">MEKFTIKDLTDNLKFEIISGQDKLDTEIKSYGINRAGLELADYFKPFKDQSEWRATLMSTKESGYMLQFDEETKIKKYTQLMKCGIPVLIITNKFKDKTLIKVAKRLNFPLLRSDYPITIQLVQKIQDIYDIYFSPTAEEHAALMNIFGTGVLIKGKSGIGKSELCLDLIKHNHLFIGDDRIILTNKSNKIIGRVHPILKNLIEIRGIGIFDIVKSNGYQVIMNESPVELVVELVEYKEQNIDNSDRLGNDWSKFKILGVEIEHIQIPVSAGRSLVNIIESAVAQFKINKSKQFENVFDVIHKRTKEFLSSKK</sequence>
<comment type="function">
    <text evidence="1">Catalyzes the ATP- as well as the pyrophosphate-dependent phosphorylation of a specific serine residue in HPr, a phosphocarrier protein of the phosphoenolpyruvate-dependent sugar phosphotransferase system (PTS). HprK/P also catalyzes the pyrophosphate-producing, inorganic phosphate-dependent dephosphorylation (phosphorolysis) of seryl-phosphorylated HPr (P-Ser-HPr). The two antagonistic activities of HprK/P are regulated by several intracellular metabolites, which change their concentration in response to the absence or presence of rapidly metabolisable carbon sources (glucose, fructose, etc.) in the growth medium. Therefore, by controlling the phosphorylation state of HPr, HPrK/P is a sensor enzyme that plays a major role in the regulation of carbon metabolism and sugar transport: it mediates carbon catabolite repression (CCR), and regulates PTS-catalyzed carbohydrate uptake and inducer exclusion.</text>
</comment>
<comment type="catalytic activity">
    <reaction evidence="1">
        <text>[HPr protein]-L-serine + ATP = [HPr protein]-O-phospho-L-serine + ADP + H(+)</text>
        <dbReference type="Rhea" id="RHEA:46600"/>
        <dbReference type="Rhea" id="RHEA-COMP:11602"/>
        <dbReference type="Rhea" id="RHEA-COMP:11603"/>
        <dbReference type="ChEBI" id="CHEBI:15378"/>
        <dbReference type="ChEBI" id="CHEBI:29999"/>
        <dbReference type="ChEBI" id="CHEBI:30616"/>
        <dbReference type="ChEBI" id="CHEBI:83421"/>
        <dbReference type="ChEBI" id="CHEBI:456216"/>
    </reaction>
</comment>
<comment type="catalytic activity">
    <reaction evidence="1">
        <text>[HPr protein]-O-phospho-L-serine + phosphate + H(+) = [HPr protein]-L-serine + diphosphate</text>
        <dbReference type="Rhea" id="RHEA:46604"/>
        <dbReference type="Rhea" id="RHEA-COMP:11602"/>
        <dbReference type="Rhea" id="RHEA-COMP:11603"/>
        <dbReference type="ChEBI" id="CHEBI:15378"/>
        <dbReference type="ChEBI" id="CHEBI:29999"/>
        <dbReference type="ChEBI" id="CHEBI:33019"/>
        <dbReference type="ChEBI" id="CHEBI:43474"/>
        <dbReference type="ChEBI" id="CHEBI:83421"/>
    </reaction>
</comment>
<comment type="cofactor">
    <cofactor evidence="1">
        <name>Mg(2+)</name>
        <dbReference type="ChEBI" id="CHEBI:18420"/>
    </cofactor>
</comment>
<comment type="subunit">
    <text evidence="1">Homohexamer.</text>
</comment>
<comment type="domain">
    <text evidence="1">The Walker A ATP-binding motif also binds Pi and PPi.</text>
</comment>
<comment type="miscellaneous">
    <text evidence="1">Both phosphorylation and phosphorolysis are carried out by the same active site and suggest a common mechanism for both reactions.</text>
</comment>
<comment type="similarity">
    <text evidence="1">Belongs to the HPrK/P family.</text>
</comment>
<gene>
    <name evidence="1" type="primary">hprK</name>
    <name type="synonym">ptsK</name>
    <name type="ordered locus">MSC_0940</name>
</gene>
<proteinExistence type="inferred from homology"/>
<organism>
    <name type="scientific">Mycoplasma mycoides subsp. mycoides SC (strain CCUG 32753 / NCTC 10114 / PG1)</name>
    <dbReference type="NCBI Taxonomy" id="272632"/>
    <lineage>
        <taxon>Bacteria</taxon>
        <taxon>Bacillati</taxon>
        <taxon>Mycoplasmatota</taxon>
        <taxon>Mollicutes</taxon>
        <taxon>Mycoplasmataceae</taxon>
        <taxon>Mycoplasma</taxon>
    </lineage>
</organism>
<feature type="chain" id="PRO_0000058971" description="HPr kinase/phosphorylase">
    <location>
        <begin position="1"/>
        <end position="313"/>
    </location>
</feature>
<feature type="region of interest" description="Important for the catalytic mechanism of both phosphorylation and dephosphorylation" evidence="1">
    <location>
        <begin position="203"/>
        <end position="212"/>
    </location>
</feature>
<feature type="region of interest" description="Important for the catalytic mechanism of dephosphorylation" evidence="1">
    <location>
        <begin position="268"/>
        <end position="273"/>
    </location>
</feature>
<feature type="active site" evidence="1">
    <location>
        <position position="141"/>
    </location>
</feature>
<feature type="active site" evidence="1">
    <location>
        <position position="162"/>
    </location>
</feature>
<feature type="active site" description="Proton acceptor; for phosphorylation activity. Proton donor; for dephosphorylation activity" evidence="1">
    <location>
        <position position="180"/>
    </location>
</feature>
<feature type="active site" evidence="1">
    <location>
        <position position="247"/>
    </location>
</feature>
<feature type="binding site" evidence="1">
    <location>
        <begin position="156"/>
        <end position="163"/>
    </location>
    <ligand>
        <name>ATP</name>
        <dbReference type="ChEBI" id="CHEBI:30616"/>
    </ligand>
</feature>
<feature type="binding site" evidence="1">
    <location>
        <position position="163"/>
    </location>
    <ligand>
        <name>Mg(2+)</name>
        <dbReference type="ChEBI" id="CHEBI:18420"/>
    </ligand>
</feature>
<feature type="binding site" evidence="1">
    <location>
        <position position="204"/>
    </location>
    <ligand>
        <name>Mg(2+)</name>
        <dbReference type="ChEBI" id="CHEBI:18420"/>
    </ligand>
</feature>
<name>HPRK_MYCMS</name>
<accession>P61325</accession>
<protein>
    <recommendedName>
        <fullName evidence="1">HPr kinase/phosphorylase</fullName>
        <shortName evidence="1">HPrK/P</shortName>
        <ecNumber evidence="1">2.7.11.-</ecNumber>
        <ecNumber evidence="1">2.7.4.-</ecNumber>
    </recommendedName>
    <alternativeName>
        <fullName evidence="1">HPr(Ser) kinase/phosphorylase</fullName>
    </alternativeName>
</protein>
<evidence type="ECO:0000255" key="1">
    <source>
        <dbReference type="HAMAP-Rule" id="MF_01249"/>
    </source>
</evidence>
<dbReference type="EC" id="2.7.11.-" evidence="1"/>
<dbReference type="EC" id="2.7.4.-" evidence="1"/>
<dbReference type="EMBL" id="BX293980">
    <property type="protein sequence ID" value="CAE77549.1"/>
    <property type="molecule type" value="Genomic_DNA"/>
</dbReference>
<dbReference type="RefSeq" id="NP_975907.1">
    <property type="nucleotide sequence ID" value="NC_005364.2"/>
</dbReference>
<dbReference type="RefSeq" id="WP_011167089.1">
    <property type="nucleotide sequence ID" value="NC_005364.2"/>
</dbReference>
<dbReference type="SMR" id="P61325"/>
<dbReference type="STRING" id="272632.MSC_0940"/>
<dbReference type="KEGG" id="mmy:MSC_0940"/>
<dbReference type="PATRIC" id="fig|272632.4.peg.1022"/>
<dbReference type="eggNOG" id="COG1493">
    <property type="taxonomic scope" value="Bacteria"/>
</dbReference>
<dbReference type="HOGENOM" id="CLU_052030_0_1_14"/>
<dbReference type="Proteomes" id="UP000001016">
    <property type="component" value="Chromosome"/>
</dbReference>
<dbReference type="GO" id="GO:0005524">
    <property type="term" value="F:ATP binding"/>
    <property type="evidence" value="ECO:0007669"/>
    <property type="project" value="UniProtKB-UniRule"/>
</dbReference>
<dbReference type="GO" id="GO:0000287">
    <property type="term" value="F:magnesium ion binding"/>
    <property type="evidence" value="ECO:0007669"/>
    <property type="project" value="UniProtKB-UniRule"/>
</dbReference>
<dbReference type="GO" id="GO:0000155">
    <property type="term" value="F:phosphorelay sensor kinase activity"/>
    <property type="evidence" value="ECO:0007669"/>
    <property type="project" value="InterPro"/>
</dbReference>
<dbReference type="GO" id="GO:0004674">
    <property type="term" value="F:protein serine/threonine kinase activity"/>
    <property type="evidence" value="ECO:0007669"/>
    <property type="project" value="UniProtKB-KW"/>
</dbReference>
<dbReference type="GO" id="GO:0004712">
    <property type="term" value="F:protein serine/threonine/tyrosine kinase activity"/>
    <property type="evidence" value="ECO:0007669"/>
    <property type="project" value="UniProtKB-UniRule"/>
</dbReference>
<dbReference type="GO" id="GO:0006109">
    <property type="term" value="P:regulation of carbohydrate metabolic process"/>
    <property type="evidence" value="ECO:0007669"/>
    <property type="project" value="UniProtKB-UniRule"/>
</dbReference>
<dbReference type="CDD" id="cd01918">
    <property type="entry name" value="HprK_C"/>
    <property type="match status" value="1"/>
</dbReference>
<dbReference type="Gene3D" id="3.40.1390.20">
    <property type="entry name" value="HprK N-terminal domain-like"/>
    <property type="match status" value="1"/>
</dbReference>
<dbReference type="Gene3D" id="3.40.50.300">
    <property type="entry name" value="P-loop containing nucleotide triphosphate hydrolases"/>
    <property type="match status" value="1"/>
</dbReference>
<dbReference type="HAMAP" id="MF_01249">
    <property type="entry name" value="HPr_kinase"/>
    <property type="match status" value="1"/>
</dbReference>
<dbReference type="InterPro" id="IPR003755">
    <property type="entry name" value="HPr(Ser)_kin/Pase"/>
</dbReference>
<dbReference type="InterPro" id="IPR011104">
    <property type="entry name" value="Hpr_kin/Pase_C"/>
</dbReference>
<dbReference type="InterPro" id="IPR011126">
    <property type="entry name" value="Hpr_kin/Pase_Hpr_N"/>
</dbReference>
<dbReference type="InterPro" id="IPR027417">
    <property type="entry name" value="P-loop_NTPase"/>
</dbReference>
<dbReference type="InterPro" id="IPR028979">
    <property type="entry name" value="Ser_kin/Pase_Hpr-like_N_sf"/>
</dbReference>
<dbReference type="NCBIfam" id="TIGR00679">
    <property type="entry name" value="hpr-ser"/>
    <property type="match status" value="1"/>
</dbReference>
<dbReference type="PANTHER" id="PTHR30305:SF1">
    <property type="entry name" value="HPR KINASE_PHOSPHORYLASE"/>
    <property type="match status" value="1"/>
</dbReference>
<dbReference type="PANTHER" id="PTHR30305">
    <property type="entry name" value="PROTEIN YJDM-RELATED"/>
    <property type="match status" value="1"/>
</dbReference>
<dbReference type="Pfam" id="PF07475">
    <property type="entry name" value="Hpr_kinase_C"/>
    <property type="match status" value="1"/>
</dbReference>
<dbReference type="Pfam" id="PF02603">
    <property type="entry name" value="Hpr_kinase_N"/>
    <property type="match status" value="1"/>
</dbReference>
<dbReference type="SUPFAM" id="SSF75138">
    <property type="entry name" value="HprK N-terminal domain-like"/>
    <property type="match status" value="1"/>
</dbReference>
<dbReference type="SUPFAM" id="SSF53795">
    <property type="entry name" value="PEP carboxykinase-like"/>
    <property type="match status" value="1"/>
</dbReference>
<reference key="1">
    <citation type="journal article" date="2004" name="Genome Res.">
        <title>The genome sequence of Mycoplasma mycoides subsp. mycoides SC type strain PG1T, the causative agent of contagious bovine pleuropneumonia (CBPP).</title>
        <authorList>
            <person name="Westberg J."/>
            <person name="Persson A."/>
            <person name="Holmberg A."/>
            <person name="Goesmann A."/>
            <person name="Lundeberg J."/>
            <person name="Johansson K.-E."/>
            <person name="Pettersson B."/>
            <person name="Uhlen M."/>
        </authorList>
    </citation>
    <scope>NUCLEOTIDE SEQUENCE [LARGE SCALE GENOMIC DNA]</scope>
    <source>
        <strain>CCUG 32753 / NCTC 10114 / PG1</strain>
    </source>
</reference>